<proteinExistence type="inferred from homology"/>
<sequence>MEEQKKLVSQYAIDHYIKSNMHLGIGTGTTVFYAIKYLSDKIKSGDLKNLKLYPTSSDTKYLLAKENITYESKFTKFSKNIDITIDGADEILLEKKALIKGGGAAHLMEKIIAYNSHQLLIIADETKIVQTLGEKVSVPIEIVPDALPFITANLEKMNFNPVLRTCKFKAGPIITDNNNYILDVKMNIENPKGAEKYFKLLPGILEIGIFNHQNTKVIYYQNGQIKEI</sequence>
<comment type="function">
    <text evidence="1">Catalyzes the reversible conversion of ribose-5-phosphate to ribulose 5-phosphate.</text>
</comment>
<comment type="catalytic activity">
    <reaction evidence="1">
        <text>aldehydo-D-ribose 5-phosphate = D-ribulose 5-phosphate</text>
        <dbReference type="Rhea" id="RHEA:14657"/>
        <dbReference type="ChEBI" id="CHEBI:58121"/>
        <dbReference type="ChEBI" id="CHEBI:58273"/>
        <dbReference type="EC" id="5.3.1.6"/>
    </reaction>
</comment>
<comment type="pathway">
    <text evidence="1">Carbohydrate degradation; pentose phosphate pathway; D-ribose 5-phosphate from D-ribulose 5-phosphate (non-oxidative stage): step 1/1.</text>
</comment>
<comment type="subunit">
    <text evidence="1">Homodimer.</text>
</comment>
<comment type="similarity">
    <text evidence="1">Belongs to the ribose 5-phosphate isomerase family.</text>
</comment>
<reference key="1">
    <citation type="submission" date="2004-12" db="EMBL/GenBank/DDBJ databases">
        <title>The genome sequence of Borrelia hermsii and Borrelia turicatae: comparative analysis of two agents of endemic N. America relapsing fever.</title>
        <authorList>
            <person name="Porcella S.F."/>
            <person name="Raffel S.J."/>
            <person name="Schrumpf M.E."/>
            <person name="Montgomery B."/>
            <person name="Smith T."/>
            <person name="Schwan T.G."/>
        </authorList>
    </citation>
    <scope>NUCLEOTIDE SEQUENCE [LARGE SCALE GENOMIC DNA]</scope>
    <source>
        <strain>HS1 / DAH</strain>
    </source>
</reference>
<name>RPIA_BORHD</name>
<keyword id="KW-0413">Isomerase</keyword>
<evidence type="ECO:0000255" key="1">
    <source>
        <dbReference type="HAMAP-Rule" id="MF_00170"/>
    </source>
</evidence>
<protein>
    <recommendedName>
        <fullName evidence="1">Ribose-5-phosphate isomerase A</fullName>
        <ecNumber evidence="1">5.3.1.6</ecNumber>
    </recommendedName>
    <alternativeName>
        <fullName evidence="1">Phosphoriboisomerase A</fullName>
        <shortName evidence="1">PRI</shortName>
    </alternativeName>
</protein>
<feature type="chain" id="PRO_1000097648" description="Ribose-5-phosphate isomerase A">
    <location>
        <begin position="1"/>
        <end position="228"/>
    </location>
</feature>
<feature type="active site" description="Proton acceptor" evidence="1">
    <location>
        <position position="109"/>
    </location>
</feature>
<feature type="binding site" evidence="1">
    <location>
        <begin position="27"/>
        <end position="30"/>
    </location>
    <ligand>
        <name>substrate</name>
    </ligand>
</feature>
<feature type="binding site" evidence="1">
    <location>
        <begin position="86"/>
        <end position="89"/>
    </location>
    <ligand>
        <name>substrate</name>
    </ligand>
</feature>
<feature type="binding site" evidence="1">
    <location>
        <begin position="100"/>
        <end position="103"/>
    </location>
    <ligand>
        <name>substrate</name>
    </ligand>
</feature>
<feature type="binding site" evidence="1">
    <location>
        <position position="127"/>
    </location>
    <ligand>
        <name>substrate</name>
    </ligand>
</feature>
<dbReference type="EC" id="5.3.1.6" evidence="1"/>
<dbReference type="EMBL" id="CP000048">
    <property type="protein sequence ID" value="AAX17156.1"/>
    <property type="molecule type" value="Genomic_DNA"/>
</dbReference>
<dbReference type="RefSeq" id="WP_012422407.1">
    <property type="nucleotide sequence ID" value="NZ_CP073136.1"/>
</dbReference>
<dbReference type="SMR" id="B2S100"/>
<dbReference type="GeneID" id="71843481"/>
<dbReference type="KEGG" id="bhr:BH0657"/>
<dbReference type="HOGENOM" id="CLU_056590_0_0_12"/>
<dbReference type="UniPathway" id="UPA00115">
    <property type="reaction ID" value="UER00412"/>
</dbReference>
<dbReference type="Proteomes" id="UP000008834">
    <property type="component" value="Chromosome"/>
</dbReference>
<dbReference type="GO" id="GO:0005829">
    <property type="term" value="C:cytosol"/>
    <property type="evidence" value="ECO:0007669"/>
    <property type="project" value="TreeGrafter"/>
</dbReference>
<dbReference type="GO" id="GO:0004751">
    <property type="term" value="F:ribose-5-phosphate isomerase activity"/>
    <property type="evidence" value="ECO:0007669"/>
    <property type="project" value="UniProtKB-UniRule"/>
</dbReference>
<dbReference type="GO" id="GO:0006014">
    <property type="term" value="P:D-ribose metabolic process"/>
    <property type="evidence" value="ECO:0007669"/>
    <property type="project" value="TreeGrafter"/>
</dbReference>
<dbReference type="GO" id="GO:0009052">
    <property type="term" value="P:pentose-phosphate shunt, non-oxidative branch"/>
    <property type="evidence" value="ECO:0007669"/>
    <property type="project" value="UniProtKB-UniRule"/>
</dbReference>
<dbReference type="CDD" id="cd01398">
    <property type="entry name" value="RPI_A"/>
    <property type="match status" value="1"/>
</dbReference>
<dbReference type="Gene3D" id="3.30.70.260">
    <property type="match status" value="1"/>
</dbReference>
<dbReference type="Gene3D" id="3.40.50.1360">
    <property type="match status" value="1"/>
</dbReference>
<dbReference type="HAMAP" id="MF_00170">
    <property type="entry name" value="Rib_5P_isom_A"/>
    <property type="match status" value="1"/>
</dbReference>
<dbReference type="InterPro" id="IPR037171">
    <property type="entry name" value="NagB/RpiA_transferase-like"/>
</dbReference>
<dbReference type="InterPro" id="IPR020672">
    <property type="entry name" value="Ribose5P_isomerase_typA_subgr"/>
</dbReference>
<dbReference type="InterPro" id="IPR004788">
    <property type="entry name" value="Ribose5P_isomerase_type_A"/>
</dbReference>
<dbReference type="NCBIfam" id="NF001924">
    <property type="entry name" value="PRK00702.1"/>
    <property type="match status" value="1"/>
</dbReference>
<dbReference type="NCBIfam" id="TIGR00021">
    <property type="entry name" value="rpiA"/>
    <property type="match status" value="1"/>
</dbReference>
<dbReference type="PANTHER" id="PTHR11934">
    <property type="entry name" value="RIBOSE-5-PHOSPHATE ISOMERASE"/>
    <property type="match status" value="1"/>
</dbReference>
<dbReference type="PANTHER" id="PTHR11934:SF0">
    <property type="entry name" value="RIBOSE-5-PHOSPHATE ISOMERASE"/>
    <property type="match status" value="1"/>
</dbReference>
<dbReference type="Pfam" id="PF06026">
    <property type="entry name" value="Rib_5-P_isom_A"/>
    <property type="match status" value="1"/>
</dbReference>
<dbReference type="SUPFAM" id="SSF75445">
    <property type="entry name" value="D-ribose-5-phosphate isomerase (RpiA), lid domain"/>
    <property type="match status" value="1"/>
</dbReference>
<dbReference type="SUPFAM" id="SSF100950">
    <property type="entry name" value="NagB/RpiA/CoA transferase-like"/>
    <property type="match status" value="1"/>
</dbReference>
<accession>B2S100</accession>
<gene>
    <name evidence="1" type="primary">rpiA</name>
    <name type="ordered locus">BH0657</name>
</gene>
<organism>
    <name type="scientific">Borrelia hermsii (strain HS1 / DAH)</name>
    <dbReference type="NCBI Taxonomy" id="314723"/>
    <lineage>
        <taxon>Bacteria</taxon>
        <taxon>Pseudomonadati</taxon>
        <taxon>Spirochaetota</taxon>
        <taxon>Spirochaetia</taxon>
        <taxon>Spirochaetales</taxon>
        <taxon>Borreliaceae</taxon>
        <taxon>Borrelia</taxon>
    </lineage>
</organism>